<sequence>MKALTTRQQEVYDLVRDHLAQTGMPPTRAEIAQRLGFRSPNAAEEHLKALARKGVIEIVSGASRGIRLLMEEEEGLPLIGRVAAGEPLLAQQHIEGHYKVDPSLFKPGADFLLRVNGMSMRDIGILDGDLLAVHKTQDVRNGQVVVARIDDEVTVKRLKKQGNIVHLLPENSEFQPIVVDLREQSFTIEGLAVGVIRNGDWI</sequence>
<organism>
    <name type="scientific">Yersinia pestis</name>
    <dbReference type="NCBI Taxonomy" id="632"/>
    <lineage>
        <taxon>Bacteria</taxon>
        <taxon>Pseudomonadati</taxon>
        <taxon>Pseudomonadota</taxon>
        <taxon>Gammaproteobacteria</taxon>
        <taxon>Enterobacterales</taxon>
        <taxon>Yersiniaceae</taxon>
        <taxon>Yersinia</taxon>
    </lineage>
</organism>
<protein>
    <recommendedName>
        <fullName evidence="1">LexA repressor</fullName>
        <ecNumber evidence="1">3.4.21.88</ecNumber>
    </recommendedName>
</protein>
<comment type="function">
    <text evidence="1">Represses a number of genes involved in the response to DNA damage (SOS response), including recA and lexA. Binds to the 16 bp palindromic sequence 5'-CTGTATATATATACAG-3'. In the presence of single-stranded DNA, RecA interacts with LexA causing an autocatalytic cleavage which disrupts the DNA-binding part of LexA, leading to derepression of the SOS regulon and eventually DNA repair.</text>
</comment>
<comment type="catalytic activity">
    <reaction evidence="1">
        <text>Hydrolysis of Ala-|-Gly bond in repressor LexA.</text>
        <dbReference type="EC" id="3.4.21.88"/>
    </reaction>
</comment>
<comment type="subunit">
    <text evidence="1">Homodimer.</text>
</comment>
<comment type="similarity">
    <text evidence="1">Belongs to the peptidase S24 family.</text>
</comment>
<proteinExistence type="inferred from homology"/>
<dbReference type="EC" id="3.4.21.88" evidence="1"/>
<dbReference type="EMBL" id="AL590842">
    <property type="protein sequence ID" value="CAL18999.1"/>
    <property type="molecule type" value="Genomic_DNA"/>
</dbReference>
<dbReference type="EMBL" id="AE009952">
    <property type="protein sequence ID" value="AAM84160.1"/>
    <property type="molecule type" value="Genomic_DNA"/>
</dbReference>
<dbReference type="EMBL" id="AE017042">
    <property type="protein sequence ID" value="AAS60740.1"/>
    <property type="molecule type" value="Genomic_DNA"/>
</dbReference>
<dbReference type="PIR" id="AE0039">
    <property type="entry name" value="AE0039"/>
</dbReference>
<dbReference type="RefSeq" id="WP_002209090.1">
    <property type="nucleotide sequence ID" value="NZ_WUCM01000014.1"/>
</dbReference>
<dbReference type="RefSeq" id="YP_002345395.1">
    <property type="nucleotide sequence ID" value="NC_003143.1"/>
</dbReference>
<dbReference type="SMR" id="Q8ZJ16"/>
<dbReference type="IntAct" id="Q8ZJ16">
    <property type="interactions" value="8"/>
</dbReference>
<dbReference type="STRING" id="214092.YPO0314"/>
<dbReference type="PaxDb" id="214092-YPO0314"/>
<dbReference type="DNASU" id="1145519"/>
<dbReference type="EnsemblBacteria" id="AAS60740">
    <property type="protein sequence ID" value="AAS60740"/>
    <property type="gene ID" value="YP_0470"/>
</dbReference>
<dbReference type="GeneID" id="57974290"/>
<dbReference type="KEGG" id="ype:YPO0314"/>
<dbReference type="KEGG" id="ypk:y0572"/>
<dbReference type="KEGG" id="ypm:YP_0470"/>
<dbReference type="PATRIC" id="fig|214092.21.peg.549"/>
<dbReference type="eggNOG" id="COG1974">
    <property type="taxonomic scope" value="Bacteria"/>
</dbReference>
<dbReference type="HOGENOM" id="CLU_066192_45_3_6"/>
<dbReference type="OMA" id="HVWLLPH"/>
<dbReference type="OrthoDB" id="9802364at2"/>
<dbReference type="Proteomes" id="UP000000815">
    <property type="component" value="Chromosome"/>
</dbReference>
<dbReference type="Proteomes" id="UP000001019">
    <property type="component" value="Chromosome"/>
</dbReference>
<dbReference type="Proteomes" id="UP000002490">
    <property type="component" value="Chromosome"/>
</dbReference>
<dbReference type="GO" id="GO:0032993">
    <property type="term" value="C:protein-DNA complex"/>
    <property type="evidence" value="ECO:0000318"/>
    <property type="project" value="GO_Central"/>
</dbReference>
<dbReference type="GO" id="GO:0001217">
    <property type="term" value="F:DNA-binding transcription repressor activity"/>
    <property type="evidence" value="ECO:0000318"/>
    <property type="project" value="GO_Central"/>
</dbReference>
<dbReference type="GO" id="GO:0043565">
    <property type="term" value="F:sequence-specific DNA binding"/>
    <property type="evidence" value="ECO:0000318"/>
    <property type="project" value="GO_Central"/>
</dbReference>
<dbReference type="GO" id="GO:0004252">
    <property type="term" value="F:serine-type endopeptidase activity"/>
    <property type="evidence" value="ECO:0007669"/>
    <property type="project" value="UniProtKB-UniRule"/>
</dbReference>
<dbReference type="GO" id="GO:0006281">
    <property type="term" value="P:DNA repair"/>
    <property type="evidence" value="ECO:0007669"/>
    <property type="project" value="UniProtKB-UniRule"/>
</dbReference>
<dbReference type="GO" id="GO:0006260">
    <property type="term" value="P:DNA replication"/>
    <property type="evidence" value="ECO:0007669"/>
    <property type="project" value="UniProtKB-UniRule"/>
</dbReference>
<dbReference type="GO" id="GO:0045892">
    <property type="term" value="P:negative regulation of DNA-templated transcription"/>
    <property type="evidence" value="ECO:0000318"/>
    <property type="project" value="GO_Central"/>
</dbReference>
<dbReference type="GO" id="GO:0006508">
    <property type="term" value="P:proteolysis"/>
    <property type="evidence" value="ECO:0007669"/>
    <property type="project" value="InterPro"/>
</dbReference>
<dbReference type="GO" id="GO:0009432">
    <property type="term" value="P:SOS response"/>
    <property type="evidence" value="ECO:0000318"/>
    <property type="project" value="GO_Central"/>
</dbReference>
<dbReference type="CDD" id="cd06529">
    <property type="entry name" value="S24_LexA-like"/>
    <property type="match status" value="1"/>
</dbReference>
<dbReference type="FunFam" id="1.10.10.10:FF:000009">
    <property type="entry name" value="LexA repressor"/>
    <property type="match status" value="1"/>
</dbReference>
<dbReference type="FunFam" id="2.10.109.10:FF:000001">
    <property type="entry name" value="LexA repressor"/>
    <property type="match status" value="1"/>
</dbReference>
<dbReference type="Gene3D" id="2.10.109.10">
    <property type="entry name" value="Umud Fragment, subunit A"/>
    <property type="match status" value="1"/>
</dbReference>
<dbReference type="Gene3D" id="1.10.10.10">
    <property type="entry name" value="Winged helix-like DNA-binding domain superfamily/Winged helix DNA-binding domain"/>
    <property type="match status" value="1"/>
</dbReference>
<dbReference type="HAMAP" id="MF_00015">
    <property type="entry name" value="LexA"/>
    <property type="match status" value="1"/>
</dbReference>
<dbReference type="InterPro" id="IPR006200">
    <property type="entry name" value="LexA"/>
</dbReference>
<dbReference type="InterPro" id="IPR039418">
    <property type="entry name" value="LexA-like"/>
</dbReference>
<dbReference type="InterPro" id="IPR036286">
    <property type="entry name" value="LexA/Signal_pep-like_sf"/>
</dbReference>
<dbReference type="InterPro" id="IPR006199">
    <property type="entry name" value="LexA_DNA-bd_dom"/>
</dbReference>
<dbReference type="InterPro" id="IPR050077">
    <property type="entry name" value="LexA_repressor"/>
</dbReference>
<dbReference type="InterPro" id="IPR006197">
    <property type="entry name" value="Peptidase_S24_LexA"/>
</dbReference>
<dbReference type="InterPro" id="IPR015927">
    <property type="entry name" value="Peptidase_S24_S26A/B/C"/>
</dbReference>
<dbReference type="InterPro" id="IPR036388">
    <property type="entry name" value="WH-like_DNA-bd_sf"/>
</dbReference>
<dbReference type="InterPro" id="IPR036390">
    <property type="entry name" value="WH_DNA-bd_sf"/>
</dbReference>
<dbReference type="NCBIfam" id="TIGR00498">
    <property type="entry name" value="lexA"/>
    <property type="match status" value="1"/>
</dbReference>
<dbReference type="PANTHER" id="PTHR33516">
    <property type="entry name" value="LEXA REPRESSOR"/>
    <property type="match status" value="1"/>
</dbReference>
<dbReference type="PANTHER" id="PTHR33516:SF2">
    <property type="entry name" value="LEXA REPRESSOR-RELATED"/>
    <property type="match status" value="1"/>
</dbReference>
<dbReference type="Pfam" id="PF01726">
    <property type="entry name" value="LexA_DNA_bind"/>
    <property type="match status" value="1"/>
</dbReference>
<dbReference type="Pfam" id="PF00717">
    <property type="entry name" value="Peptidase_S24"/>
    <property type="match status" value="1"/>
</dbReference>
<dbReference type="PRINTS" id="PR00726">
    <property type="entry name" value="LEXASERPTASE"/>
</dbReference>
<dbReference type="SUPFAM" id="SSF51306">
    <property type="entry name" value="LexA/Signal peptidase"/>
    <property type="match status" value="1"/>
</dbReference>
<dbReference type="SUPFAM" id="SSF46785">
    <property type="entry name" value="Winged helix' DNA-binding domain"/>
    <property type="match status" value="1"/>
</dbReference>
<accession>Q8ZJ16</accession>
<accession>Q0WJZ3</accession>
<keyword id="KW-0068">Autocatalytic cleavage</keyword>
<keyword id="KW-0227">DNA damage</keyword>
<keyword id="KW-0234">DNA repair</keyword>
<keyword id="KW-0235">DNA replication</keyword>
<keyword id="KW-0238">DNA-binding</keyword>
<keyword id="KW-0378">Hydrolase</keyword>
<keyword id="KW-1185">Reference proteome</keyword>
<keyword id="KW-0678">Repressor</keyword>
<keyword id="KW-0742">SOS response</keyword>
<keyword id="KW-0804">Transcription</keyword>
<keyword id="KW-0805">Transcription regulation</keyword>
<reference key="1">
    <citation type="journal article" date="2001" name="Nature">
        <title>Genome sequence of Yersinia pestis, the causative agent of plague.</title>
        <authorList>
            <person name="Parkhill J."/>
            <person name="Wren B.W."/>
            <person name="Thomson N.R."/>
            <person name="Titball R.W."/>
            <person name="Holden M.T.G."/>
            <person name="Prentice M.B."/>
            <person name="Sebaihia M."/>
            <person name="James K.D."/>
            <person name="Churcher C.M."/>
            <person name="Mungall K.L."/>
            <person name="Baker S."/>
            <person name="Basham D."/>
            <person name="Bentley S.D."/>
            <person name="Brooks K."/>
            <person name="Cerdeno-Tarraga A.-M."/>
            <person name="Chillingworth T."/>
            <person name="Cronin A."/>
            <person name="Davies R.M."/>
            <person name="Davis P."/>
            <person name="Dougan G."/>
            <person name="Feltwell T."/>
            <person name="Hamlin N."/>
            <person name="Holroyd S."/>
            <person name="Jagels K."/>
            <person name="Karlyshev A.V."/>
            <person name="Leather S."/>
            <person name="Moule S."/>
            <person name="Oyston P.C.F."/>
            <person name="Quail M.A."/>
            <person name="Rutherford K.M."/>
            <person name="Simmonds M."/>
            <person name="Skelton J."/>
            <person name="Stevens K."/>
            <person name="Whitehead S."/>
            <person name="Barrell B.G."/>
        </authorList>
    </citation>
    <scope>NUCLEOTIDE SEQUENCE [LARGE SCALE GENOMIC DNA]</scope>
    <source>
        <strain>CO-92 / Biovar Orientalis</strain>
    </source>
</reference>
<reference key="2">
    <citation type="journal article" date="2002" name="J. Bacteriol.">
        <title>Genome sequence of Yersinia pestis KIM.</title>
        <authorList>
            <person name="Deng W."/>
            <person name="Burland V."/>
            <person name="Plunkett G. III"/>
            <person name="Boutin A."/>
            <person name="Mayhew G.F."/>
            <person name="Liss P."/>
            <person name="Perna N.T."/>
            <person name="Rose D.J."/>
            <person name="Mau B."/>
            <person name="Zhou S."/>
            <person name="Schwartz D.C."/>
            <person name="Fetherston J.D."/>
            <person name="Lindler L.E."/>
            <person name="Brubaker R.R."/>
            <person name="Plano G.V."/>
            <person name="Straley S.C."/>
            <person name="McDonough K.A."/>
            <person name="Nilles M.L."/>
            <person name="Matson J.S."/>
            <person name="Blattner F.R."/>
            <person name="Perry R.D."/>
        </authorList>
    </citation>
    <scope>NUCLEOTIDE SEQUENCE [LARGE SCALE GENOMIC DNA]</scope>
    <source>
        <strain>KIM10+ / Biovar Mediaevalis</strain>
    </source>
</reference>
<reference key="3">
    <citation type="journal article" date="2004" name="DNA Res.">
        <title>Complete genome sequence of Yersinia pestis strain 91001, an isolate avirulent to humans.</title>
        <authorList>
            <person name="Song Y."/>
            <person name="Tong Z."/>
            <person name="Wang J."/>
            <person name="Wang L."/>
            <person name="Guo Z."/>
            <person name="Han Y."/>
            <person name="Zhang J."/>
            <person name="Pei D."/>
            <person name="Zhou D."/>
            <person name="Qin H."/>
            <person name="Pang X."/>
            <person name="Han Y."/>
            <person name="Zhai J."/>
            <person name="Li M."/>
            <person name="Cui B."/>
            <person name="Qi Z."/>
            <person name="Jin L."/>
            <person name="Dai R."/>
            <person name="Chen F."/>
            <person name="Li S."/>
            <person name="Ye C."/>
            <person name="Du Z."/>
            <person name="Lin W."/>
            <person name="Wang J."/>
            <person name="Yu J."/>
            <person name="Yang H."/>
            <person name="Wang J."/>
            <person name="Huang P."/>
            <person name="Yang R."/>
        </authorList>
    </citation>
    <scope>NUCLEOTIDE SEQUENCE [LARGE SCALE GENOMIC DNA]</scope>
    <source>
        <strain>91001 / Biovar Mediaevalis</strain>
    </source>
</reference>
<gene>
    <name evidence="1" type="primary">lexA</name>
    <name type="ordered locus">YPO0314</name>
    <name type="ordered locus">y0572</name>
    <name type="ordered locus">YP_0470</name>
</gene>
<name>LEXA_YERPE</name>
<feature type="chain" id="PRO_0000170115" description="LexA repressor">
    <location>
        <begin position="1"/>
        <end position="202"/>
    </location>
</feature>
<feature type="DNA-binding region" description="H-T-H motif" evidence="1">
    <location>
        <begin position="28"/>
        <end position="48"/>
    </location>
</feature>
<feature type="active site" description="For autocatalytic cleavage activity" evidence="1">
    <location>
        <position position="119"/>
    </location>
</feature>
<feature type="active site" description="For autocatalytic cleavage activity" evidence="1">
    <location>
        <position position="156"/>
    </location>
</feature>
<feature type="site" description="Cleavage; by autolysis" evidence="1">
    <location>
        <begin position="84"/>
        <end position="85"/>
    </location>
</feature>
<evidence type="ECO:0000255" key="1">
    <source>
        <dbReference type="HAMAP-Rule" id="MF_00015"/>
    </source>
</evidence>